<protein>
    <recommendedName>
        <fullName evidence="8">DNA ADP-ribosyl transferase</fullName>
        <shortName evidence="8">DarT</shortName>
        <ecNumber evidence="4">2.4.2.-</ecNumber>
    </recommendedName>
    <alternativeName>
        <fullName evidence="8">Toxin DarT</fullName>
    </alternativeName>
</protein>
<organism>
    <name type="scientific">Mycobacterium tuberculosis (strain ATCC 25618 / H37Rv)</name>
    <dbReference type="NCBI Taxonomy" id="83332"/>
    <lineage>
        <taxon>Bacteria</taxon>
        <taxon>Bacillati</taxon>
        <taxon>Actinomycetota</taxon>
        <taxon>Actinomycetes</taxon>
        <taxon>Mycobacteriales</taxon>
        <taxon>Mycobacteriaceae</taxon>
        <taxon>Mycobacterium</taxon>
        <taxon>Mycobacterium tuberculosis complex</taxon>
    </lineage>
</organism>
<sequence length="230" mass="25580">MITRYKPESGFVARSGGPDRKRPHDWIVWHFTHADNLPGIITAGRLLADSAVTPTTEVAYNPVKELRRHKVVAPDSRYPASMASDHVPFYIAARSPMLYVVCKGHSGYSGGAGPLVHLGVALGDIIDADLTWCASDGNAAASYTKFSRQVDTLGTFVDFDLLCQRQWHNTDDDPNRQSRRAAEILVYGHVPFELVSYVCCYNTETMTRVRTLLDPVGGVRKYVIKPGMYY</sequence>
<proteinExistence type="evidence at protein level"/>
<gene>
    <name evidence="9" type="primary">darT</name>
    <name evidence="11" type="ordered locus">Rv0059</name>
</gene>
<reference evidence="11" key="1">
    <citation type="journal article" date="1998" name="Nature">
        <title>Deciphering the biology of Mycobacterium tuberculosis from the complete genome sequence.</title>
        <authorList>
            <person name="Cole S.T."/>
            <person name="Brosch R."/>
            <person name="Parkhill J."/>
            <person name="Garnier T."/>
            <person name="Churcher C.M."/>
            <person name="Harris D.E."/>
            <person name="Gordon S.V."/>
            <person name="Eiglmeier K."/>
            <person name="Gas S."/>
            <person name="Barry C.E. III"/>
            <person name="Tekaia F."/>
            <person name="Badcock K."/>
            <person name="Basham D."/>
            <person name="Brown D."/>
            <person name="Chillingworth T."/>
            <person name="Connor R."/>
            <person name="Davies R.M."/>
            <person name="Devlin K."/>
            <person name="Feltwell T."/>
            <person name="Gentles S."/>
            <person name="Hamlin N."/>
            <person name="Holroyd S."/>
            <person name="Hornsby T."/>
            <person name="Jagels K."/>
            <person name="Krogh A."/>
            <person name="McLean J."/>
            <person name="Moule S."/>
            <person name="Murphy L.D."/>
            <person name="Oliver S."/>
            <person name="Osborne J."/>
            <person name="Quail M.A."/>
            <person name="Rajandream M.A."/>
            <person name="Rogers J."/>
            <person name="Rutter S."/>
            <person name="Seeger K."/>
            <person name="Skelton S."/>
            <person name="Squares S."/>
            <person name="Squares R."/>
            <person name="Sulston J.E."/>
            <person name="Taylor K."/>
            <person name="Whitehead S."/>
            <person name="Barrell B.G."/>
        </authorList>
    </citation>
    <scope>NUCLEOTIDE SEQUENCE [LARGE SCALE GENOMIC DNA]</scope>
    <source>
        <strain>ATCC 25618 / H37Rv</strain>
    </source>
</reference>
<reference evidence="13" key="2">
    <citation type="journal article" date="2011" name="Mol. Cell. Proteomics">
        <title>Proteogenomic analysis of Mycobacterium tuberculosis by high resolution mass spectrometry.</title>
        <authorList>
            <person name="Kelkar D.S."/>
            <person name="Kumar D."/>
            <person name="Kumar P."/>
            <person name="Balakrishnan L."/>
            <person name="Muthusamy B."/>
            <person name="Yadav A.K."/>
            <person name="Shrivastava P."/>
            <person name="Marimuthu A."/>
            <person name="Anand S."/>
            <person name="Sundaram H."/>
            <person name="Kingsbury R."/>
            <person name="Harsha H.C."/>
            <person name="Nair B."/>
            <person name="Prasad T.S."/>
            <person name="Chauhan D.S."/>
            <person name="Katoch K."/>
            <person name="Katoch V.M."/>
            <person name="Kumar P."/>
            <person name="Chaerkady R."/>
            <person name="Ramachandran S."/>
            <person name="Dash D."/>
            <person name="Pandey A."/>
        </authorList>
    </citation>
    <scope>IDENTIFICATION BY MASS SPECTROMETRY [LARGE SCALE ANALYSIS]</scope>
    <source>
        <strain>ATCC 25618 / H37Rv</strain>
    </source>
</reference>
<reference key="3">
    <citation type="journal article" date="2016" name="Mol. Cell">
        <title>The Toxin-Antitoxin System DarTG Catalyzes Reversible ADP-Ribosylation of DNA.</title>
        <authorList>
            <person name="Jankevicius G."/>
            <person name="Ariza A."/>
            <person name="Ahel M."/>
            <person name="Ahel I."/>
        </authorList>
    </citation>
    <scope>FUNCTION AS A TOXIN</scope>
    <scope>FUNCTION AS AN ADP-RIBOSYL TRANSFERASE</scope>
    <source>
        <strain>H37Rv</strain>
    </source>
</reference>
<reference key="4">
    <citation type="journal article" date="2020" name="Mol. Microbiol.">
        <title>Depletion of the DarG antitoxin in Mycobacterium tuberculosis triggers the DNA-damage response and leads to cell death.</title>
        <authorList>
            <person name="Zaveri A."/>
            <person name="Wang R."/>
            <person name="Botella L."/>
            <person name="Sharma R."/>
            <person name="Zhu L."/>
            <person name="Wallach J.B."/>
            <person name="Song N."/>
            <person name="Jansen R.S."/>
            <person name="Rhee K.Y."/>
            <person name="Ehrt S."/>
            <person name="Schnappinger D."/>
        </authorList>
    </citation>
    <scope>FUNCTION AS A TOXIN</scope>
    <scope>SUBUNIT</scope>
    <scope>DISRUPTION PHENOTYPE</scope>
    <source>
        <strain>H37Rv</strain>
    </source>
</reference>
<reference key="5">
    <citation type="journal article" date="2021" name="Nature">
        <title>Molecular basis for DarT ADP-ribosylation of a DNA base.</title>
        <authorList>
            <person name="Schuller M."/>
            <person name="Butler R.E."/>
            <person name="Ariza A."/>
            <person name="Tromans-Coia C."/>
            <person name="Jankevicius G."/>
            <person name="Claridge T.D.W."/>
            <person name="Kendall S.L."/>
            <person name="Goh S."/>
            <person name="Stewart G.R."/>
            <person name="Ahel I."/>
        </authorList>
    </citation>
    <scope>FUNCTION AS A TOXIN</scope>
    <scope>FUNCTION AS AN ADP-RIBOSYL TRANSFERASE</scope>
    <scope>OPERON STRUCTURE</scope>
    <scope>DOMAIN</scope>
    <scope>DISRUPTION PHENOTYPE</scope>
    <source>
        <strain>H37Rv</strain>
    </source>
</reference>
<reference evidence="12" key="6">
    <citation type="journal article" date="2023" name="Structure">
        <title>Structural insights into DarT toxin neutralization by cognate DarG antitoxin: ssDNA mimicry by DarG C-terminal domain keeps the DarT toxin inhibited.</title>
        <authorList>
            <person name="Deep A."/>
            <person name="Singh L."/>
            <person name="Kaur J."/>
            <person name="Velusamy M."/>
            <person name="Bhardwaj P."/>
            <person name="Singh R."/>
            <person name="Thakur K.G."/>
        </authorList>
    </citation>
    <scope>X-RAY CRYSTALLOGRAPHY (2.20 ANGSTROMS)</scope>
    <scope>SUBUNIT</scope>
    <scope>MUTAGENESIS OF GLU-183</scope>
</reference>
<accession>O53604</accession>
<accession>I6Y2M9</accession>
<accession>Q7DAJ1</accession>
<name>DART_MYCTU</name>
<evidence type="ECO:0000250" key="1">
    <source>
        <dbReference type="UniProtKB" id="A0A0B0SG80"/>
    </source>
</evidence>
<evidence type="ECO:0000250" key="2">
    <source>
        <dbReference type="UniProtKB" id="B7UP20"/>
    </source>
</evidence>
<evidence type="ECO:0000255" key="3">
    <source>
        <dbReference type="PROSITE-ProRule" id="PRU01362"/>
    </source>
</evidence>
<evidence type="ECO:0000269" key="4">
    <source>
    </source>
</evidence>
<evidence type="ECO:0000269" key="5">
    <source>
    </source>
</evidence>
<evidence type="ECO:0000269" key="6">
    <source>
    </source>
</evidence>
<evidence type="ECO:0000269" key="7">
    <source>
    </source>
</evidence>
<evidence type="ECO:0000303" key="8">
    <source>
    </source>
</evidence>
<evidence type="ECO:0000303" key="9">
    <source>
    </source>
</evidence>
<evidence type="ECO:0000305" key="10">
    <source>
    </source>
</evidence>
<evidence type="ECO:0000312" key="11">
    <source>
        <dbReference type="EMBL" id="CCP42781.1"/>
    </source>
</evidence>
<evidence type="ECO:0007744" key="12">
    <source>
        <dbReference type="PDB" id="7YK3"/>
    </source>
</evidence>
<evidence type="ECO:0007744" key="13">
    <source>
    </source>
</evidence>
<evidence type="ECO:0007829" key="14">
    <source>
        <dbReference type="PDB" id="7YK3"/>
    </source>
</evidence>
<comment type="function">
    <text evidence="2 4 5 6">Toxic component of the hybrid type II/IV toxin-antitoxin (TA) system DarTG, which plays a crucial role in controlling bacterial growth and bacteriophage infection. Its toxic effect is neutralized by cognate antitoxin DarG (PubMed:27939941). ADP-ribosylates ssDNA, preferentially in the motif TTTW. In case of phage infection, DarT toxin ADP-ribosylates DNA, which inhibits both viral DNA and RNA synthesis and leads to abortive infection (By similarity). Uncontrolled expression of DarT leads to ADP-ribosylation of the origin of chromosomal replication DNA in cells (in vitro the most heavily modified motifs are TTTT/A in the OriC lower strand) and growth arrest (PubMed:34408320). Is very toxic to E.coli, it cannot be expressed in E.coli (PubMed:27939941). Experiments in situ in which antitoxin DarG levels are depleted (similar to overexpression of DarT) lead to cell death; expression of wild-type DarG protein from M.tuberculosis or T.aquaticus restores growth. Cells with decreased levels of DarG are more sensitive to bedaquilline (targets respiration), DNA-damaging drugs (mitomycin C, netropsin) and transcription-targeted drugs (rifabutin and rifampicin). When DarG is depleted, a DNA-damage response is induced and mutability is increased, suggesting ADP-ribosylation of DNA is the toxic effect (PubMed:32634279).</text>
</comment>
<comment type="catalytic activity">
    <reaction evidence="3">
        <text>a thymidine in DNA + NAD(+) = an N-(ADP-alpha-D-ribosyl)-thymidine in DNA + nicotinamide + H(+)</text>
        <dbReference type="Rhea" id="RHEA:71651"/>
        <dbReference type="Rhea" id="RHEA-COMP:13556"/>
        <dbReference type="Rhea" id="RHEA-COMP:18051"/>
        <dbReference type="ChEBI" id="CHEBI:15378"/>
        <dbReference type="ChEBI" id="CHEBI:17154"/>
        <dbReference type="ChEBI" id="CHEBI:57540"/>
        <dbReference type="ChEBI" id="CHEBI:137386"/>
        <dbReference type="ChEBI" id="CHEBI:191199"/>
    </reaction>
    <physiologicalReaction direction="left-to-right" evidence="3 4 6">
        <dbReference type="Rhea" id="RHEA:71652"/>
    </physiologicalReaction>
</comment>
<comment type="subunit">
    <text evidence="5 7">Interacts with cognate antitoxin DarG (via C-terminus); this heterodimeric complex neutralizes the toxic effect of DarT by preventing ssDNA binding to DarT and consequently inactivating the toxin by direct protein-protein interactions.</text>
</comment>
<comment type="induction">
    <text evidence="6">Part of the dnaB-darT-darG operon.</text>
</comment>
<comment type="domain">
    <text evidence="1">The NAD(+)-binding element stabilizes the ADP-ribosylating turn-turn (ARTT) loop which confers substrate specificity; both domains contribute to ssDNA-binding.</text>
</comment>
<comment type="disruption phenotype">
    <text evidence="5 6">A double darT-darG deletion shows no change in growth in culture, upon infection of mice or upon exposure to a variety of stresses (PubMed:32634279). Another group finds the double knockout gives a competitive advantage over wild-type cells in liquid culture growth experiments (PubMed:34408320).</text>
</comment>
<comment type="similarity">
    <text evidence="3">Belongs to the DarT ADP-ribosyltransferase family.</text>
</comment>
<feature type="chain" id="PRO_0000456050" description="DNA ADP-ribosyl transferase">
    <location>
        <begin position="1"/>
        <end position="230"/>
    </location>
</feature>
<feature type="domain" description="DarT" evidence="3">
    <location>
        <begin position="26"/>
        <end position="230"/>
    </location>
</feature>
<feature type="region of interest" description="NAD(+)-binding element" evidence="1">
    <location>
        <begin position="54"/>
        <end position="70"/>
    </location>
</feature>
<feature type="region of interest" description="ADP-ribosylating turn-turn loop" evidence="1">
    <location>
        <begin position="135"/>
        <end position="183"/>
    </location>
</feature>
<feature type="active site" description="Proton acceptor" evidence="3">
    <location>
        <position position="67"/>
    </location>
</feature>
<feature type="active site" evidence="3">
    <location>
        <position position="183"/>
    </location>
</feature>
<feature type="binding site" evidence="3">
    <location>
        <begin position="30"/>
        <end position="32"/>
    </location>
    <ligand>
        <name>NAD(+)</name>
        <dbReference type="ChEBI" id="CHEBI:57540"/>
    </ligand>
</feature>
<feature type="binding site" evidence="3">
    <location>
        <position position="39"/>
    </location>
    <ligand>
        <name>NAD(+)</name>
        <dbReference type="ChEBI" id="CHEBI:57540"/>
    </ligand>
</feature>
<feature type="binding site" evidence="3">
    <location>
        <position position="47"/>
    </location>
    <ligand>
        <name>NAD(+)</name>
        <dbReference type="ChEBI" id="CHEBI:57540"/>
    </ligand>
</feature>
<feature type="binding site" evidence="3">
    <location>
        <position position="67"/>
    </location>
    <ligand>
        <name>NAD(+)</name>
        <dbReference type="ChEBI" id="CHEBI:57540"/>
    </ligand>
</feature>
<feature type="mutagenesis site" description="Loss of catalytic activity." evidence="10">
    <original>E</original>
    <variation>A</variation>
    <location>
        <position position="183"/>
    </location>
</feature>
<feature type="strand" evidence="14">
    <location>
        <begin position="13"/>
        <end position="17"/>
    </location>
</feature>
<feature type="helix" evidence="14">
    <location>
        <begin position="23"/>
        <end position="25"/>
    </location>
</feature>
<feature type="strand" evidence="14">
    <location>
        <begin position="26"/>
        <end position="33"/>
    </location>
</feature>
<feature type="helix" evidence="14">
    <location>
        <begin position="34"/>
        <end position="36"/>
    </location>
</feature>
<feature type="helix" evidence="14">
    <location>
        <begin position="37"/>
        <end position="43"/>
    </location>
</feature>
<feature type="strand" evidence="14">
    <location>
        <begin position="45"/>
        <end position="47"/>
    </location>
</feature>
<feature type="turn" evidence="14">
    <location>
        <begin position="49"/>
        <end position="51"/>
    </location>
</feature>
<feature type="helix" evidence="14">
    <location>
        <begin position="61"/>
        <end position="67"/>
    </location>
</feature>
<feature type="helix" evidence="14">
    <location>
        <begin position="83"/>
        <end position="85"/>
    </location>
</feature>
<feature type="strand" evidence="14">
    <location>
        <begin position="86"/>
        <end position="94"/>
    </location>
</feature>
<feature type="helix" evidence="14">
    <location>
        <begin position="96"/>
        <end position="103"/>
    </location>
</feature>
<feature type="strand" evidence="14">
    <location>
        <begin position="115"/>
        <end position="121"/>
    </location>
</feature>
<feature type="helix" evidence="14">
    <location>
        <begin position="122"/>
        <end position="127"/>
    </location>
</feature>
<feature type="strand" evidence="14">
    <location>
        <begin position="132"/>
        <end position="137"/>
    </location>
</feature>
<feature type="helix" evidence="14">
    <location>
        <begin position="150"/>
        <end position="152"/>
    </location>
</feature>
<feature type="helix" evidence="14">
    <location>
        <begin position="153"/>
        <end position="156"/>
    </location>
</feature>
<feature type="helix" evidence="14">
    <location>
        <begin position="159"/>
        <end position="163"/>
    </location>
</feature>
<feature type="helix" evidence="14">
    <location>
        <begin position="176"/>
        <end position="179"/>
    </location>
</feature>
<feature type="strand" evidence="14">
    <location>
        <begin position="183"/>
        <end position="191"/>
    </location>
</feature>
<feature type="helix" evidence="14">
    <location>
        <begin position="192"/>
        <end position="194"/>
    </location>
</feature>
<feature type="strand" evidence="14">
    <location>
        <begin position="197"/>
        <end position="202"/>
    </location>
</feature>
<feature type="helix" evidence="14">
    <location>
        <begin position="203"/>
        <end position="216"/>
    </location>
</feature>
<feature type="strand" evidence="14">
    <location>
        <begin position="221"/>
        <end position="224"/>
    </location>
</feature>
<feature type="helix" evidence="14">
    <location>
        <begin position="226"/>
        <end position="228"/>
    </location>
</feature>
<dbReference type="EC" id="2.4.2.-" evidence="4"/>
<dbReference type="EMBL" id="AL123456">
    <property type="protein sequence ID" value="CCP42781.1"/>
    <property type="molecule type" value="Genomic_DNA"/>
</dbReference>
<dbReference type="RefSeq" id="NP_214573.1">
    <property type="nucleotide sequence ID" value="NC_000962.3"/>
</dbReference>
<dbReference type="RefSeq" id="WP_003400548.1">
    <property type="nucleotide sequence ID" value="NZ_NVQJ01000005.1"/>
</dbReference>
<dbReference type="PDB" id="7YK3">
    <property type="method" value="X-ray"/>
    <property type="resolution" value="2.20 A"/>
    <property type="chains" value="A/C=1-230"/>
</dbReference>
<dbReference type="PDBsum" id="7YK3"/>
<dbReference type="SMR" id="O53604"/>
<dbReference type="STRING" id="83332.Rv0059"/>
<dbReference type="PaxDb" id="83332-Rv0059"/>
<dbReference type="GeneID" id="45424018"/>
<dbReference type="GeneID" id="887006"/>
<dbReference type="KEGG" id="mtu:Rv0059"/>
<dbReference type="KEGG" id="mtv:RVBD_0059"/>
<dbReference type="PATRIC" id="fig|83332.111.peg.66"/>
<dbReference type="TubercuList" id="Rv0059"/>
<dbReference type="eggNOG" id="COG4948">
    <property type="taxonomic scope" value="Bacteria"/>
</dbReference>
<dbReference type="InParanoid" id="O53604"/>
<dbReference type="OrthoDB" id="9813972at2"/>
<dbReference type="Proteomes" id="UP000001584">
    <property type="component" value="Chromosome"/>
</dbReference>
<dbReference type="GO" id="GO:0003677">
    <property type="term" value="F:DNA binding"/>
    <property type="evidence" value="ECO:0007669"/>
    <property type="project" value="UniProtKB-KW"/>
</dbReference>
<dbReference type="GO" id="GO:0016757">
    <property type="term" value="F:glycosyltransferase activity"/>
    <property type="evidence" value="ECO:0007669"/>
    <property type="project" value="UniProtKB-KW"/>
</dbReference>
<dbReference type="GO" id="GO:0016779">
    <property type="term" value="F:nucleotidyltransferase activity"/>
    <property type="evidence" value="ECO:0007669"/>
    <property type="project" value="UniProtKB-KW"/>
</dbReference>
<dbReference type="InterPro" id="IPR029494">
    <property type="entry name" value="DarT"/>
</dbReference>
<dbReference type="Pfam" id="PF14487">
    <property type="entry name" value="DarT"/>
    <property type="match status" value="1"/>
</dbReference>
<dbReference type="PROSITE" id="PS52018">
    <property type="entry name" value="DART"/>
    <property type="match status" value="1"/>
</dbReference>
<keyword id="KW-0002">3D-structure</keyword>
<keyword id="KW-0238">DNA-binding</keyword>
<keyword id="KW-0328">Glycosyltransferase</keyword>
<keyword id="KW-0548">Nucleotidyltransferase</keyword>
<keyword id="KW-1185">Reference proteome</keyword>
<keyword id="KW-1277">Toxin-antitoxin system</keyword>
<keyword id="KW-0808">Transferase</keyword>